<proteinExistence type="inferred from homology"/>
<reference key="1">
    <citation type="journal article" date="2000" name="Nature">
        <title>The genome sequence of the plant pathogen Xylella fastidiosa.</title>
        <authorList>
            <person name="Simpson A.J.G."/>
            <person name="Reinach F.C."/>
            <person name="Arruda P."/>
            <person name="Abreu F.A."/>
            <person name="Acencio M."/>
            <person name="Alvarenga R."/>
            <person name="Alves L.M.C."/>
            <person name="Araya J.E."/>
            <person name="Baia G.S."/>
            <person name="Baptista C.S."/>
            <person name="Barros M.H."/>
            <person name="Bonaccorsi E.D."/>
            <person name="Bordin S."/>
            <person name="Bove J.M."/>
            <person name="Briones M.R.S."/>
            <person name="Bueno M.R.P."/>
            <person name="Camargo A.A."/>
            <person name="Camargo L.E.A."/>
            <person name="Carraro D.M."/>
            <person name="Carrer H."/>
            <person name="Colauto N.B."/>
            <person name="Colombo C."/>
            <person name="Costa F.F."/>
            <person name="Costa M.C.R."/>
            <person name="Costa-Neto C.M."/>
            <person name="Coutinho L.L."/>
            <person name="Cristofani M."/>
            <person name="Dias-Neto E."/>
            <person name="Docena C."/>
            <person name="El-Dorry H."/>
            <person name="Facincani A.P."/>
            <person name="Ferreira A.J.S."/>
            <person name="Ferreira V.C.A."/>
            <person name="Ferro J.A."/>
            <person name="Fraga J.S."/>
            <person name="Franca S.C."/>
            <person name="Franco M.C."/>
            <person name="Frohme M."/>
            <person name="Furlan L.R."/>
            <person name="Garnier M."/>
            <person name="Goldman G.H."/>
            <person name="Goldman M.H.S."/>
            <person name="Gomes S.L."/>
            <person name="Gruber A."/>
            <person name="Ho P.L."/>
            <person name="Hoheisel J.D."/>
            <person name="Junqueira M.L."/>
            <person name="Kemper E.L."/>
            <person name="Kitajima J.P."/>
            <person name="Krieger J.E."/>
            <person name="Kuramae E.E."/>
            <person name="Laigret F."/>
            <person name="Lambais M.R."/>
            <person name="Leite L.C.C."/>
            <person name="Lemos E.G.M."/>
            <person name="Lemos M.V.F."/>
            <person name="Lopes S.A."/>
            <person name="Lopes C.R."/>
            <person name="Machado J.A."/>
            <person name="Machado M.A."/>
            <person name="Madeira A.M.B.N."/>
            <person name="Madeira H.M.F."/>
            <person name="Marino C.L."/>
            <person name="Marques M.V."/>
            <person name="Martins E.A.L."/>
            <person name="Martins E.M.F."/>
            <person name="Matsukuma A.Y."/>
            <person name="Menck C.F.M."/>
            <person name="Miracca E.C."/>
            <person name="Miyaki C.Y."/>
            <person name="Monteiro-Vitorello C.B."/>
            <person name="Moon D.H."/>
            <person name="Nagai M.A."/>
            <person name="Nascimento A.L.T.O."/>
            <person name="Netto L.E.S."/>
            <person name="Nhani A. Jr."/>
            <person name="Nobrega F.G."/>
            <person name="Nunes L.R."/>
            <person name="Oliveira M.A."/>
            <person name="de Oliveira M.C."/>
            <person name="de Oliveira R.C."/>
            <person name="Palmieri D.A."/>
            <person name="Paris A."/>
            <person name="Peixoto B.R."/>
            <person name="Pereira G.A.G."/>
            <person name="Pereira H.A. Jr."/>
            <person name="Pesquero J.B."/>
            <person name="Quaggio R.B."/>
            <person name="Roberto P.G."/>
            <person name="Rodrigues V."/>
            <person name="de Rosa A.J.M."/>
            <person name="de Rosa V.E. Jr."/>
            <person name="de Sa R.G."/>
            <person name="Santelli R.V."/>
            <person name="Sawasaki H.E."/>
            <person name="da Silva A.C.R."/>
            <person name="da Silva A.M."/>
            <person name="da Silva F.R."/>
            <person name="Silva W.A. Jr."/>
            <person name="da Silveira J.F."/>
            <person name="Silvestri M.L.Z."/>
            <person name="Siqueira W.J."/>
            <person name="de Souza A.A."/>
            <person name="de Souza A.P."/>
            <person name="Terenzi M.F."/>
            <person name="Truffi D."/>
            <person name="Tsai S.M."/>
            <person name="Tsuhako M.H."/>
            <person name="Vallada H."/>
            <person name="Van Sluys M.A."/>
            <person name="Verjovski-Almeida S."/>
            <person name="Vettore A.L."/>
            <person name="Zago M.A."/>
            <person name="Zatz M."/>
            <person name="Meidanis J."/>
            <person name="Setubal J.C."/>
        </authorList>
    </citation>
    <scope>NUCLEOTIDE SEQUENCE [LARGE SCALE GENOMIC DNA]</scope>
    <source>
        <strain>9a5c</strain>
    </source>
</reference>
<keyword id="KW-0963">Cytoplasm</keyword>
<keyword id="KW-0227">DNA damage</keyword>
<keyword id="KW-0228">DNA excision</keyword>
<keyword id="KW-0234">DNA repair</keyword>
<keyword id="KW-0267">Excision nuclease</keyword>
<keyword id="KW-0742">SOS response</keyword>
<evidence type="ECO:0000255" key="1">
    <source>
        <dbReference type="HAMAP-Rule" id="MF_00203"/>
    </source>
</evidence>
<evidence type="ECO:0000305" key="2"/>
<accession>Q9PB34</accession>
<feature type="chain" id="PRO_0000138362" description="UvrABC system protein C">
    <location>
        <begin position="1"/>
        <end position="621"/>
    </location>
</feature>
<feature type="domain" description="GIY-YIG" evidence="1">
    <location>
        <begin position="20"/>
        <end position="98"/>
    </location>
</feature>
<feature type="domain" description="UVR" evidence="1">
    <location>
        <begin position="207"/>
        <end position="242"/>
    </location>
</feature>
<dbReference type="EMBL" id="AE003849">
    <property type="protein sequence ID" value="AAF85110.1"/>
    <property type="status" value="ALT_INIT"/>
    <property type="molecule type" value="Genomic_DNA"/>
</dbReference>
<dbReference type="PIR" id="H82573">
    <property type="entry name" value="H82573"/>
</dbReference>
<dbReference type="RefSeq" id="WP_031337649.1">
    <property type="nucleotide sequence ID" value="NC_002488.3"/>
</dbReference>
<dbReference type="SMR" id="Q9PB34"/>
<dbReference type="STRING" id="160492.XF_2311"/>
<dbReference type="KEGG" id="xfa:XF_2311"/>
<dbReference type="eggNOG" id="COG0322">
    <property type="taxonomic scope" value="Bacteria"/>
</dbReference>
<dbReference type="HOGENOM" id="CLU_014841_3_0_6"/>
<dbReference type="Proteomes" id="UP000000812">
    <property type="component" value="Chromosome"/>
</dbReference>
<dbReference type="GO" id="GO:0005737">
    <property type="term" value="C:cytoplasm"/>
    <property type="evidence" value="ECO:0007669"/>
    <property type="project" value="UniProtKB-SubCell"/>
</dbReference>
<dbReference type="GO" id="GO:0009380">
    <property type="term" value="C:excinuclease repair complex"/>
    <property type="evidence" value="ECO:0007669"/>
    <property type="project" value="InterPro"/>
</dbReference>
<dbReference type="GO" id="GO:0003677">
    <property type="term" value="F:DNA binding"/>
    <property type="evidence" value="ECO:0007669"/>
    <property type="project" value="UniProtKB-UniRule"/>
</dbReference>
<dbReference type="GO" id="GO:0009381">
    <property type="term" value="F:excinuclease ABC activity"/>
    <property type="evidence" value="ECO:0007669"/>
    <property type="project" value="UniProtKB-UniRule"/>
</dbReference>
<dbReference type="GO" id="GO:0006289">
    <property type="term" value="P:nucleotide-excision repair"/>
    <property type="evidence" value="ECO:0007669"/>
    <property type="project" value="UniProtKB-UniRule"/>
</dbReference>
<dbReference type="GO" id="GO:0009432">
    <property type="term" value="P:SOS response"/>
    <property type="evidence" value="ECO:0007669"/>
    <property type="project" value="UniProtKB-UniRule"/>
</dbReference>
<dbReference type="CDD" id="cd10434">
    <property type="entry name" value="GIY-YIG_UvrC_Cho"/>
    <property type="match status" value="1"/>
</dbReference>
<dbReference type="FunFam" id="1.10.150.20:FF:000005">
    <property type="entry name" value="UvrABC system protein C"/>
    <property type="match status" value="1"/>
</dbReference>
<dbReference type="FunFam" id="3.30.420.340:FF:000001">
    <property type="entry name" value="UvrABC system protein C"/>
    <property type="match status" value="1"/>
</dbReference>
<dbReference type="FunFam" id="3.40.1440.10:FF:000001">
    <property type="entry name" value="UvrABC system protein C"/>
    <property type="match status" value="1"/>
</dbReference>
<dbReference type="Gene3D" id="1.10.150.20">
    <property type="entry name" value="5' to 3' exonuclease, C-terminal subdomain"/>
    <property type="match status" value="1"/>
</dbReference>
<dbReference type="Gene3D" id="3.40.1440.10">
    <property type="entry name" value="GIY-YIG endonuclease"/>
    <property type="match status" value="1"/>
</dbReference>
<dbReference type="Gene3D" id="4.10.860.10">
    <property type="entry name" value="UVR domain"/>
    <property type="match status" value="1"/>
</dbReference>
<dbReference type="Gene3D" id="3.30.420.340">
    <property type="entry name" value="UvrC, RNAse H endonuclease domain"/>
    <property type="match status" value="1"/>
</dbReference>
<dbReference type="HAMAP" id="MF_00203">
    <property type="entry name" value="UvrC"/>
    <property type="match status" value="1"/>
</dbReference>
<dbReference type="InterPro" id="IPR000305">
    <property type="entry name" value="GIY-YIG_endonuc"/>
</dbReference>
<dbReference type="InterPro" id="IPR035901">
    <property type="entry name" value="GIY-YIG_endonuc_sf"/>
</dbReference>
<dbReference type="InterPro" id="IPR047296">
    <property type="entry name" value="GIY-YIG_UvrC_Cho"/>
</dbReference>
<dbReference type="InterPro" id="IPR003583">
    <property type="entry name" value="Hlx-hairpin-Hlx_DNA-bd_motif"/>
</dbReference>
<dbReference type="InterPro" id="IPR010994">
    <property type="entry name" value="RuvA_2-like"/>
</dbReference>
<dbReference type="InterPro" id="IPR001943">
    <property type="entry name" value="UVR_dom"/>
</dbReference>
<dbReference type="InterPro" id="IPR036876">
    <property type="entry name" value="UVR_dom_sf"/>
</dbReference>
<dbReference type="InterPro" id="IPR050066">
    <property type="entry name" value="UvrABC_protein_C"/>
</dbReference>
<dbReference type="InterPro" id="IPR004791">
    <property type="entry name" value="UvrC"/>
</dbReference>
<dbReference type="InterPro" id="IPR001162">
    <property type="entry name" value="UvrC_RNase_H_dom"/>
</dbReference>
<dbReference type="InterPro" id="IPR038476">
    <property type="entry name" value="UvrC_RNase_H_dom_sf"/>
</dbReference>
<dbReference type="NCBIfam" id="TIGR00194">
    <property type="entry name" value="uvrC"/>
    <property type="match status" value="1"/>
</dbReference>
<dbReference type="PANTHER" id="PTHR30562:SF1">
    <property type="entry name" value="UVRABC SYSTEM PROTEIN C"/>
    <property type="match status" value="1"/>
</dbReference>
<dbReference type="PANTHER" id="PTHR30562">
    <property type="entry name" value="UVRC/OXIDOREDUCTASE"/>
    <property type="match status" value="1"/>
</dbReference>
<dbReference type="Pfam" id="PF01541">
    <property type="entry name" value="GIY-YIG"/>
    <property type="match status" value="1"/>
</dbReference>
<dbReference type="Pfam" id="PF14520">
    <property type="entry name" value="HHH_5"/>
    <property type="match status" value="1"/>
</dbReference>
<dbReference type="Pfam" id="PF02151">
    <property type="entry name" value="UVR"/>
    <property type="match status" value="1"/>
</dbReference>
<dbReference type="Pfam" id="PF22920">
    <property type="entry name" value="UvrC_RNaseH"/>
    <property type="match status" value="1"/>
</dbReference>
<dbReference type="Pfam" id="PF08459">
    <property type="entry name" value="UvrC_RNaseH_dom"/>
    <property type="match status" value="1"/>
</dbReference>
<dbReference type="SMART" id="SM00465">
    <property type="entry name" value="GIYc"/>
    <property type="match status" value="1"/>
</dbReference>
<dbReference type="SMART" id="SM00278">
    <property type="entry name" value="HhH1"/>
    <property type="match status" value="2"/>
</dbReference>
<dbReference type="SUPFAM" id="SSF46600">
    <property type="entry name" value="C-terminal UvrC-binding domain of UvrB"/>
    <property type="match status" value="1"/>
</dbReference>
<dbReference type="SUPFAM" id="SSF82771">
    <property type="entry name" value="GIY-YIG endonuclease"/>
    <property type="match status" value="1"/>
</dbReference>
<dbReference type="SUPFAM" id="SSF47781">
    <property type="entry name" value="RuvA domain 2-like"/>
    <property type="match status" value="1"/>
</dbReference>
<dbReference type="PROSITE" id="PS50164">
    <property type="entry name" value="GIY_YIG"/>
    <property type="match status" value="1"/>
</dbReference>
<dbReference type="PROSITE" id="PS50151">
    <property type="entry name" value="UVR"/>
    <property type="match status" value="1"/>
</dbReference>
<dbReference type="PROSITE" id="PS50165">
    <property type="entry name" value="UVRC"/>
    <property type="match status" value="1"/>
</dbReference>
<name>UVRC_XYLFA</name>
<protein>
    <recommendedName>
        <fullName evidence="1">UvrABC system protein C</fullName>
        <shortName evidence="1">Protein UvrC</shortName>
    </recommendedName>
    <alternativeName>
        <fullName evidence="1">Excinuclease ABC subunit C</fullName>
    </alternativeName>
</protein>
<sequence>MTDNAPITFDGKRFAAHLSMAPGVYCMYAADDTLLYVGKAGALRKRVASYFNGTPKNTRLTAMLAQVVRMDVTITRNEAEALLLENQLIKSLAPRYNVLLRDDKSYPYVLLTREAWPRIALHRGPQIVPGRYFGPYPGVTAVRDMLNLIHKLFKLRSCEDSVFRNRSRPCLQYQIGRCSAPCVNVVTHDNYTEAVRRVTLFLEGKSDLLAEELIQAMQVASEHLEFEQAARLRDLLTSLRSMQNRQYVDGRAADLDVLACAALSGHACVLLLSFRDGRNLGTRMFFPKTNGEERTAEILSAFVSQYYAEYPPPPEILLDQEIPDHTLLEAAFSRSSAHKISLRWNVRGERAGYVELAVRNAQVALSTELTSQRAQRVRSEAVRQLLGLEEPIKRVECFDISHTMGEATVASCVVFDAVGPVRSQYRRYNITGITPGDDYAAMRQAIERRFRRAVEEDKQGERPDVLFIDGGAGQLAQAKMALNAVGVESVLLVGVSKGEERRAGHETLIMLDGQELHPGAASPALQFIQQVRDEAHRFAITGHRARRQKTRMTSKLEDIPGIGSRRRANLLKHFGGLAGVKAAGQTEIARVEGISTALAAKIYASLHGLSKSDAVNASRVS</sequence>
<comment type="function">
    <text evidence="1">The UvrABC repair system catalyzes the recognition and processing of DNA lesions. UvrC both incises the 5' and 3' sides of the lesion. The N-terminal half is responsible for the 3' incision and the C-terminal half is responsible for the 5' incision.</text>
</comment>
<comment type="subunit">
    <text evidence="1">Interacts with UvrB in an incision complex.</text>
</comment>
<comment type="subcellular location">
    <subcellularLocation>
        <location evidence="1">Cytoplasm</location>
    </subcellularLocation>
</comment>
<comment type="similarity">
    <text evidence="1">Belongs to the UvrC family.</text>
</comment>
<comment type="sequence caution" evidence="2">
    <conflict type="erroneous initiation">
        <sequence resource="EMBL-CDS" id="AAF85110"/>
    </conflict>
</comment>
<organism>
    <name type="scientific">Xylella fastidiosa (strain 9a5c)</name>
    <dbReference type="NCBI Taxonomy" id="160492"/>
    <lineage>
        <taxon>Bacteria</taxon>
        <taxon>Pseudomonadati</taxon>
        <taxon>Pseudomonadota</taxon>
        <taxon>Gammaproteobacteria</taxon>
        <taxon>Lysobacterales</taxon>
        <taxon>Lysobacteraceae</taxon>
        <taxon>Xylella</taxon>
    </lineage>
</organism>
<gene>
    <name evidence="1" type="primary">uvrC</name>
    <name type="ordered locus">XF_2311</name>
</gene>